<accession>O15255</accession>
<accession>Q6IBF1</accession>
<dbReference type="EMBL" id="Y13374">
    <property type="protein sequence ID" value="CAA73804.1"/>
    <property type="molecule type" value="mRNA"/>
</dbReference>
<dbReference type="EMBL" id="D88756">
    <property type="protein sequence ID" value="BAB46920.1"/>
    <property type="molecule type" value="mRNA"/>
</dbReference>
<dbReference type="EMBL" id="AF038168">
    <property type="protein sequence ID" value="AAB97361.1"/>
    <property type="molecule type" value="mRNA"/>
</dbReference>
<dbReference type="EMBL" id="AF052096">
    <property type="protein sequence ID" value="AAC28618.1"/>
    <property type="molecule type" value="mRNA"/>
</dbReference>
<dbReference type="EMBL" id="CR456853">
    <property type="protein sequence ID" value="CAG33134.1"/>
    <property type="molecule type" value="mRNA"/>
</dbReference>
<dbReference type="EMBL" id="AL136169">
    <property type="status" value="NOT_ANNOTATED_CDS"/>
    <property type="molecule type" value="Genomic_DNA"/>
</dbReference>
<dbReference type="EMBL" id="BC002385">
    <property type="status" value="NOT_ANNOTATED_CDS"/>
    <property type="molecule type" value="mRNA"/>
</dbReference>
<dbReference type="EMBL" id="BC002410">
    <property type="status" value="NOT_ANNOTATED_CDS"/>
    <property type="molecule type" value="mRNA"/>
</dbReference>
<dbReference type="IntAct" id="O15255">
    <property type="interactions" value="3"/>
</dbReference>
<dbReference type="iPTMnet" id="O15255"/>
<dbReference type="BioMuta" id="RTL8C"/>
<dbReference type="jPOST" id="O15255"/>
<dbReference type="AGR" id="HGNC:2569"/>
<dbReference type="GeneCards" id="RTL8C"/>
<dbReference type="HGNC" id="HGNC:2569">
    <property type="gene designation" value="RTL8C"/>
</dbReference>
<dbReference type="MIM" id="300213">
    <property type="type" value="gene"/>
</dbReference>
<dbReference type="neXtProt" id="NX_O15255"/>
<dbReference type="InParanoid" id="O15255"/>
<dbReference type="OrthoDB" id="9508136at2759"/>
<dbReference type="PAN-GO" id="O15255">
    <property type="GO annotations" value="0 GO annotations based on evolutionary models"/>
</dbReference>
<dbReference type="PhylomeDB" id="O15255"/>
<dbReference type="PathwayCommons" id="O15255"/>
<dbReference type="SignaLink" id="O15255"/>
<dbReference type="ChiTaRS" id="RTL8C">
    <property type="organism name" value="human"/>
</dbReference>
<dbReference type="Pharos" id="O15255">
    <property type="development level" value="Tdark"/>
</dbReference>
<dbReference type="Proteomes" id="UP000005640">
    <property type="component" value="Unplaced"/>
</dbReference>
<dbReference type="RNAct" id="O15255">
    <property type="molecule type" value="protein"/>
</dbReference>
<dbReference type="GO" id="GO:0005886">
    <property type="term" value="C:plasma membrane"/>
    <property type="evidence" value="ECO:0007669"/>
    <property type="project" value="UniProtKB-SubCell"/>
</dbReference>
<dbReference type="InterPro" id="IPR031771">
    <property type="entry name" value="CAAX_1"/>
</dbReference>
<dbReference type="Pfam" id="PF15895">
    <property type="entry name" value="CAAX_1"/>
    <property type="match status" value="1"/>
</dbReference>
<name>CXX1_HUMAN</name>
<feature type="chain" id="PRO_0000079745" description="CAAX box protein 1">
    <location>
        <begin position="1"/>
        <end position="206"/>
    </location>
</feature>
<feature type="propeptide" id="PRO_0000396750" description="Removed in mature form" evidence="1">
    <location>
        <begin position="207"/>
        <end position="209"/>
    </location>
</feature>
<feature type="region of interest" description="Disordered" evidence="2">
    <location>
        <begin position="182"/>
        <end position="209"/>
    </location>
</feature>
<feature type="modified residue" description="Cysteine methyl ester" evidence="1">
    <location>
        <position position="206"/>
    </location>
</feature>
<feature type="lipid moiety-binding region" description="S-farnesyl cysteine" evidence="1">
    <location>
        <position position="206"/>
    </location>
</feature>
<feature type="sequence variant" id="VAR_037283" description="In dbSNP:rs5930670.">
    <original>S</original>
    <variation>W</variation>
    <location>
        <position position="152"/>
    </location>
</feature>
<organism>
    <name type="scientific">Homo sapiens</name>
    <name type="common">Human</name>
    <dbReference type="NCBI Taxonomy" id="9606"/>
    <lineage>
        <taxon>Eukaryota</taxon>
        <taxon>Metazoa</taxon>
        <taxon>Chordata</taxon>
        <taxon>Craniata</taxon>
        <taxon>Vertebrata</taxon>
        <taxon>Euteleostomi</taxon>
        <taxon>Mammalia</taxon>
        <taxon>Eutheria</taxon>
        <taxon>Euarchontoglires</taxon>
        <taxon>Primates</taxon>
        <taxon>Haplorrhini</taxon>
        <taxon>Catarrhini</taxon>
        <taxon>Hominidae</taxon>
        <taxon>Homo</taxon>
    </lineage>
</organism>
<proteinExistence type="evidence at transcript level"/>
<gene>
    <name evidence="5" type="primary">RTL8C</name>
    <name type="synonym">CXX1</name>
    <name type="synonym">FAM127A</name>
    <name type="synonym">MAR8</name>
    <name type="synonym">MAR8C</name>
    <name type="synonym">MART8</name>
    <name type="ORF">hucep-5</name>
</gene>
<evidence type="ECO:0000255" key="1"/>
<evidence type="ECO:0000256" key="2">
    <source>
        <dbReference type="SAM" id="MobiDB-lite"/>
    </source>
</evidence>
<evidence type="ECO:0000269" key="3">
    <source>
    </source>
</evidence>
<evidence type="ECO:0000305" key="4"/>
<evidence type="ECO:0000312" key="5">
    <source>
        <dbReference type="HGNC" id="HGNC:2569"/>
    </source>
</evidence>
<protein>
    <recommendedName>
        <fullName>CAAX box protein 1</fullName>
    </recommendedName>
    <alternativeName>
        <fullName>Cerebral protein 5</fullName>
    </alternativeName>
</protein>
<reference key="1">
    <citation type="journal article" date="1997" name="Genomics">
        <title>A low-copy repeat in Xq26 represents a novel putatively prenylated protein gene (CXX1) and its pseudogenes (DXS9914, DXS9915, and DXS9916).</title>
        <authorList>
            <person name="Frattini A."/>
            <person name="Faranda S."/>
            <person name="Zucchi I."/>
            <person name="Vezzoni P."/>
        </authorList>
    </citation>
    <scope>NUCLEOTIDE SEQUENCE [MRNA]</scope>
    <scope>TISSUE SPECIFICITY</scope>
    <source>
        <tissue>Brain</tissue>
    </source>
</reference>
<reference key="2">
    <citation type="submission" date="1996-11" db="EMBL/GenBank/DDBJ databases">
        <title>Biological functions of a novel human gene, hucep-5, which is specifically expressed in the central nervous system.</title>
        <authorList>
            <person name="Yoshimoto M."/>
            <person name="Yazaki M."/>
            <person name="Takayama K."/>
            <person name="Matsumoto K."/>
        </authorList>
    </citation>
    <scope>NUCLEOTIDE SEQUENCE [MRNA]</scope>
    <source>
        <tissue>Brain</tissue>
    </source>
</reference>
<reference key="3">
    <citation type="submission" date="1997-12" db="EMBL/GenBank/DDBJ databases">
        <authorList>
            <person name="Yu W."/>
            <person name="Sarginson J."/>
            <person name="Gibbs R.A."/>
        </authorList>
    </citation>
    <scope>NUCLEOTIDE SEQUENCE [LARGE SCALE MRNA]</scope>
    <source>
        <tissue>Brain</tissue>
    </source>
</reference>
<reference key="4">
    <citation type="submission" date="2004-06" db="EMBL/GenBank/DDBJ databases">
        <title>Cloning of human full open reading frames in Gateway(TM) system entry vector (pDONR201).</title>
        <authorList>
            <person name="Ebert L."/>
            <person name="Schick M."/>
            <person name="Neubert P."/>
            <person name="Schatten R."/>
            <person name="Henze S."/>
            <person name="Korn B."/>
        </authorList>
    </citation>
    <scope>NUCLEOTIDE SEQUENCE [LARGE SCALE MRNA]</scope>
</reference>
<reference key="5">
    <citation type="journal article" date="2005" name="Nature">
        <title>The DNA sequence of the human X chromosome.</title>
        <authorList>
            <person name="Ross M.T."/>
            <person name="Grafham D.V."/>
            <person name="Coffey A.J."/>
            <person name="Scherer S."/>
            <person name="McLay K."/>
            <person name="Muzny D."/>
            <person name="Platzer M."/>
            <person name="Howell G.R."/>
            <person name="Burrows C."/>
            <person name="Bird C.P."/>
            <person name="Frankish A."/>
            <person name="Lovell F.L."/>
            <person name="Howe K.L."/>
            <person name="Ashurst J.L."/>
            <person name="Fulton R.S."/>
            <person name="Sudbrak R."/>
            <person name="Wen G."/>
            <person name="Jones M.C."/>
            <person name="Hurles M.E."/>
            <person name="Andrews T.D."/>
            <person name="Scott C.E."/>
            <person name="Searle S."/>
            <person name="Ramser J."/>
            <person name="Whittaker A."/>
            <person name="Deadman R."/>
            <person name="Carter N.P."/>
            <person name="Hunt S.E."/>
            <person name="Chen R."/>
            <person name="Cree A."/>
            <person name="Gunaratne P."/>
            <person name="Havlak P."/>
            <person name="Hodgson A."/>
            <person name="Metzker M.L."/>
            <person name="Richards S."/>
            <person name="Scott G."/>
            <person name="Steffen D."/>
            <person name="Sodergren E."/>
            <person name="Wheeler D.A."/>
            <person name="Worley K.C."/>
            <person name="Ainscough R."/>
            <person name="Ambrose K.D."/>
            <person name="Ansari-Lari M.A."/>
            <person name="Aradhya S."/>
            <person name="Ashwell R.I."/>
            <person name="Babbage A.K."/>
            <person name="Bagguley C.L."/>
            <person name="Ballabio A."/>
            <person name="Banerjee R."/>
            <person name="Barker G.E."/>
            <person name="Barlow K.F."/>
            <person name="Barrett I.P."/>
            <person name="Bates K.N."/>
            <person name="Beare D.M."/>
            <person name="Beasley H."/>
            <person name="Beasley O."/>
            <person name="Beck A."/>
            <person name="Bethel G."/>
            <person name="Blechschmidt K."/>
            <person name="Brady N."/>
            <person name="Bray-Allen S."/>
            <person name="Bridgeman A.M."/>
            <person name="Brown A.J."/>
            <person name="Brown M.J."/>
            <person name="Bonnin D."/>
            <person name="Bruford E.A."/>
            <person name="Buhay C."/>
            <person name="Burch P."/>
            <person name="Burford D."/>
            <person name="Burgess J."/>
            <person name="Burrill W."/>
            <person name="Burton J."/>
            <person name="Bye J.M."/>
            <person name="Carder C."/>
            <person name="Carrel L."/>
            <person name="Chako J."/>
            <person name="Chapman J.C."/>
            <person name="Chavez D."/>
            <person name="Chen E."/>
            <person name="Chen G."/>
            <person name="Chen Y."/>
            <person name="Chen Z."/>
            <person name="Chinault C."/>
            <person name="Ciccodicola A."/>
            <person name="Clark S.Y."/>
            <person name="Clarke G."/>
            <person name="Clee C.M."/>
            <person name="Clegg S."/>
            <person name="Clerc-Blankenburg K."/>
            <person name="Clifford K."/>
            <person name="Cobley V."/>
            <person name="Cole C.G."/>
            <person name="Conquer J.S."/>
            <person name="Corby N."/>
            <person name="Connor R.E."/>
            <person name="David R."/>
            <person name="Davies J."/>
            <person name="Davis C."/>
            <person name="Davis J."/>
            <person name="Delgado O."/>
            <person name="Deshazo D."/>
            <person name="Dhami P."/>
            <person name="Ding Y."/>
            <person name="Dinh H."/>
            <person name="Dodsworth S."/>
            <person name="Draper H."/>
            <person name="Dugan-Rocha S."/>
            <person name="Dunham A."/>
            <person name="Dunn M."/>
            <person name="Durbin K.J."/>
            <person name="Dutta I."/>
            <person name="Eades T."/>
            <person name="Ellwood M."/>
            <person name="Emery-Cohen A."/>
            <person name="Errington H."/>
            <person name="Evans K.L."/>
            <person name="Faulkner L."/>
            <person name="Francis F."/>
            <person name="Frankland J."/>
            <person name="Fraser A.E."/>
            <person name="Galgoczy P."/>
            <person name="Gilbert J."/>
            <person name="Gill R."/>
            <person name="Gloeckner G."/>
            <person name="Gregory S.G."/>
            <person name="Gribble S."/>
            <person name="Griffiths C."/>
            <person name="Grocock R."/>
            <person name="Gu Y."/>
            <person name="Gwilliam R."/>
            <person name="Hamilton C."/>
            <person name="Hart E.A."/>
            <person name="Hawes A."/>
            <person name="Heath P.D."/>
            <person name="Heitmann K."/>
            <person name="Hennig S."/>
            <person name="Hernandez J."/>
            <person name="Hinzmann B."/>
            <person name="Ho S."/>
            <person name="Hoffs M."/>
            <person name="Howden P.J."/>
            <person name="Huckle E.J."/>
            <person name="Hume J."/>
            <person name="Hunt P.J."/>
            <person name="Hunt A.R."/>
            <person name="Isherwood J."/>
            <person name="Jacob L."/>
            <person name="Johnson D."/>
            <person name="Jones S."/>
            <person name="de Jong P.J."/>
            <person name="Joseph S.S."/>
            <person name="Keenan S."/>
            <person name="Kelly S."/>
            <person name="Kershaw J.K."/>
            <person name="Khan Z."/>
            <person name="Kioschis P."/>
            <person name="Klages S."/>
            <person name="Knights A.J."/>
            <person name="Kosiura A."/>
            <person name="Kovar-Smith C."/>
            <person name="Laird G.K."/>
            <person name="Langford C."/>
            <person name="Lawlor S."/>
            <person name="Leversha M."/>
            <person name="Lewis L."/>
            <person name="Liu W."/>
            <person name="Lloyd C."/>
            <person name="Lloyd D.M."/>
            <person name="Loulseged H."/>
            <person name="Loveland J.E."/>
            <person name="Lovell J.D."/>
            <person name="Lozado R."/>
            <person name="Lu J."/>
            <person name="Lyne R."/>
            <person name="Ma J."/>
            <person name="Maheshwari M."/>
            <person name="Matthews L.H."/>
            <person name="McDowall J."/>
            <person name="McLaren S."/>
            <person name="McMurray A."/>
            <person name="Meidl P."/>
            <person name="Meitinger T."/>
            <person name="Milne S."/>
            <person name="Miner G."/>
            <person name="Mistry S.L."/>
            <person name="Morgan M."/>
            <person name="Morris S."/>
            <person name="Mueller I."/>
            <person name="Mullikin J.C."/>
            <person name="Nguyen N."/>
            <person name="Nordsiek G."/>
            <person name="Nyakatura G."/>
            <person name="O'dell C.N."/>
            <person name="Okwuonu G."/>
            <person name="Palmer S."/>
            <person name="Pandian R."/>
            <person name="Parker D."/>
            <person name="Parrish J."/>
            <person name="Pasternak S."/>
            <person name="Patel D."/>
            <person name="Pearce A.V."/>
            <person name="Pearson D.M."/>
            <person name="Pelan S.E."/>
            <person name="Perez L."/>
            <person name="Porter K.M."/>
            <person name="Ramsey Y."/>
            <person name="Reichwald K."/>
            <person name="Rhodes S."/>
            <person name="Ridler K.A."/>
            <person name="Schlessinger D."/>
            <person name="Schueler M.G."/>
            <person name="Sehra H.K."/>
            <person name="Shaw-Smith C."/>
            <person name="Shen H."/>
            <person name="Sheridan E.M."/>
            <person name="Shownkeen R."/>
            <person name="Skuce C.D."/>
            <person name="Smith M.L."/>
            <person name="Sotheran E.C."/>
            <person name="Steingruber H.E."/>
            <person name="Steward C.A."/>
            <person name="Storey R."/>
            <person name="Swann R.M."/>
            <person name="Swarbreck D."/>
            <person name="Tabor P.E."/>
            <person name="Taudien S."/>
            <person name="Taylor T."/>
            <person name="Teague B."/>
            <person name="Thomas K."/>
            <person name="Thorpe A."/>
            <person name="Timms K."/>
            <person name="Tracey A."/>
            <person name="Trevanion S."/>
            <person name="Tromans A.C."/>
            <person name="d'Urso M."/>
            <person name="Verduzco D."/>
            <person name="Villasana D."/>
            <person name="Waldron L."/>
            <person name="Wall M."/>
            <person name="Wang Q."/>
            <person name="Warren J."/>
            <person name="Warry G.L."/>
            <person name="Wei X."/>
            <person name="West A."/>
            <person name="Whitehead S.L."/>
            <person name="Whiteley M.N."/>
            <person name="Wilkinson J.E."/>
            <person name="Willey D.L."/>
            <person name="Williams G."/>
            <person name="Williams L."/>
            <person name="Williamson A."/>
            <person name="Williamson H."/>
            <person name="Wilming L."/>
            <person name="Woodmansey R.L."/>
            <person name="Wray P.W."/>
            <person name="Yen J."/>
            <person name="Zhang J."/>
            <person name="Zhou J."/>
            <person name="Zoghbi H."/>
            <person name="Zorilla S."/>
            <person name="Buck D."/>
            <person name="Reinhardt R."/>
            <person name="Poustka A."/>
            <person name="Rosenthal A."/>
            <person name="Lehrach H."/>
            <person name="Meindl A."/>
            <person name="Minx P.J."/>
            <person name="Hillier L.W."/>
            <person name="Willard H.F."/>
            <person name="Wilson R.K."/>
            <person name="Waterston R.H."/>
            <person name="Rice C.M."/>
            <person name="Vaudin M."/>
            <person name="Coulson A."/>
            <person name="Nelson D.L."/>
            <person name="Weinstock G."/>
            <person name="Sulston J.E."/>
            <person name="Durbin R.M."/>
            <person name="Hubbard T."/>
            <person name="Gibbs R.A."/>
            <person name="Beck S."/>
            <person name="Rogers J."/>
            <person name="Bentley D.R."/>
        </authorList>
    </citation>
    <scope>NUCLEOTIDE SEQUENCE [LARGE SCALE GENOMIC DNA]</scope>
</reference>
<reference key="6">
    <citation type="journal article" date="2004" name="Genome Res.">
        <title>The status, quality, and expansion of the NIH full-length cDNA project: the Mammalian Gene Collection (MGC).</title>
        <authorList>
            <consortium name="The MGC Project Team"/>
        </authorList>
    </citation>
    <scope>NUCLEOTIDE SEQUENCE [LARGE SCALE MRNA]</scope>
    <source>
        <tissue>Muscle</tissue>
    </source>
</reference>
<comment type="subcellular location">
    <subcellularLocation>
        <location evidence="4">Cell membrane</location>
        <topology evidence="4">Lipid-anchor</topology>
    </subcellularLocation>
</comment>
<comment type="tissue specificity">
    <text evidence="3">Ubiquitous.</text>
</comment>
<comment type="caution">
    <text evidence="4">There seem to be two proteins encoded by the FAM127A gene, one with a C-terminal CAAX box (the sequence shown here) and a smaller protein (AC A6ZKI3).</text>
</comment>
<keyword id="KW-1003">Cell membrane</keyword>
<keyword id="KW-0449">Lipoprotein</keyword>
<keyword id="KW-0472">Membrane</keyword>
<keyword id="KW-0488">Methylation</keyword>
<keyword id="KW-0636">Prenylation</keyword>
<keyword id="KW-1185">Reference proteome</keyword>
<sequence length="209" mass="22278">MGGGRGLLGRETLGPGGGCSGEGPLCYWPPPGSPPAPSLRASLPLEPPRCPLRSCSLPRSACLCSRNSAPGSCCRPWASLWSEPPPSPSSQPAPPMYIWTLSCAPAASWAPVTHWTDHPLPPLPSPLLPTRLPDDYIILPTDLRCHSHRHPSHPTDRLLLLVIWTHLGGIWAGHSPWTVIQTAGRPPRDLSPSARPISSPPPETSCVLA</sequence>